<accession>Q9TVU5</accession>
<accession>Q4MYR6</accession>
<evidence type="ECO:0000250" key="1"/>
<evidence type="ECO:0000269" key="2">
    <source>
    </source>
</evidence>
<evidence type="ECO:0000305" key="3"/>
<evidence type="ECO:0000305" key="4">
    <source>
    </source>
</evidence>
<comment type="function">
    <text evidence="1">Protein transport. Probably involved in vesicular traffic from ER to Golgi (By similarity).</text>
</comment>
<comment type="subcellular location">
    <subcellularLocation>
        <location evidence="3">Cell membrane</location>
        <topology evidence="3">Lipid-anchor</topology>
        <orientation evidence="3">Cytoplasmic side</orientation>
    </subcellularLocation>
    <text evidence="2">Located in the vicinity of the schizont nucleus within the infected lymphocyte.</text>
</comment>
<comment type="similarity">
    <text evidence="3">Belongs to the small GTPase superfamily. Rab family.</text>
</comment>
<comment type="sequence caution" evidence="3">
    <conflict type="erroneous gene model prediction">
        <sequence resource="EMBL-CDS" id="EAN30616"/>
    </conflict>
</comment>
<reference key="1">
    <citation type="journal article" date="1999" name="Mol. Biochem. Parasitol.">
        <title>A Rab1 homologue with a novel isoprenylation signal provides insight into the secretory pathway of Theileria parva.</title>
        <authorList>
            <person name="Janoo R.T."/>
            <person name="Musoke A."/>
            <person name="Wells C."/>
            <person name="Bishop R.P."/>
        </authorList>
    </citation>
    <scope>NUCLEOTIDE SEQUENCE [GENOMIC DNA / MRNA]</scope>
    <scope>ISOPRENYLATION AT CYS-219</scope>
    <scope>SUBCELLULAR LOCATION</scope>
    <source>
        <strain>Muguga</strain>
    </source>
</reference>
<reference key="2">
    <citation type="journal article" date="2005" name="Science">
        <title>Genome sequence of Theileria parva, a bovine pathogen that transforms lymphocytes.</title>
        <authorList>
            <person name="Gardner M.J."/>
            <person name="Bishop R."/>
            <person name="Shah T."/>
            <person name="de Villiers E.P."/>
            <person name="Carlton J.M."/>
            <person name="Hall N."/>
            <person name="Ren Q."/>
            <person name="Paulsen I.T."/>
            <person name="Pain A."/>
            <person name="Berriman M."/>
            <person name="Wilson R.J.M."/>
            <person name="Sato S."/>
            <person name="Ralph S.A."/>
            <person name="Mann D.J."/>
            <person name="Xiong Z."/>
            <person name="Shallom S.J."/>
            <person name="Weidman J."/>
            <person name="Jiang L."/>
            <person name="Lynn J."/>
            <person name="Weaver B."/>
            <person name="Shoaibi A."/>
            <person name="Domingo A.R."/>
            <person name="Wasawo D."/>
            <person name="Crabtree J."/>
            <person name="Wortman J.R."/>
            <person name="Haas B."/>
            <person name="Angiuoli S.V."/>
            <person name="Creasy T.H."/>
            <person name="Lu C."/>
            <person name="Suh B."/>
            <person name="Silva J.C."/>
            <person name="Utterback T.R."/>
            <person name="Feldblyum T.V."/>
            <person name="Pertea M."/>
            <person name="Allen J."/>
            <person name="Nierman W.C."/>
            <person name="Taracha E.L.N."/>
            <person name="Salzberg S.L."/>
            <person name="White O.R."/>
            <person name="Fitzhugh H.A."/>
            <person name="Morzaria S."/>
            <person name="Venter J.C."/>
            <person name="Fraser C.M."/>
            <person name="Nene V."/>
        </authorList>
    </citation>
    <scope>NUCLEOTIDE SEQUENCE [LARGE SCALE GENOMIC DNA]</scope>
    <source>
        <strain>Muguga</strain>
    </source>
</reference>
<gene>
    <name type="primary">rab1</name>
    <name type="ordered locus">TP03_0775</name>
</gene>
<organism>
    <name type="scientific">Theileria parva</name>
    <name type="common">East coast fever infection agent</name>
    <dbReference type="NCBI Taxonomy" id="5875"/>
    <lineage>
        <taxon>Eukaryota</taxon>
        <taxon>Sar</taxon>
        <taxon>Alveolata</taxon>
        <taxon>Apicomplexa</taxon>
        <taxon>Aconoidasida</taxon>
        <taxon>Piroplasmida</taxon>
        <taxon>Theileriidae</taxon>
        <taxon>Theileria</taxon>
    </lineage>
</organism>
<sequence length="220" mass="24470">MKEYDYLFKIIVIGDSGTGKSSLLLRFADNTYSESYMSTIGVDFKIKTVKIDNTTIKLQIWDTAGQERFRTITSTYYRGAHGIICVYDVTNKLSFDHITETWLQDIDKYATSNVCKLLIGNKIDLAESRVVSADEAKHVAEQNNMNYIEASAKTDSNVEKAFTTIAKALKDKVTQYPSNAPASTVSLNTASKVPTNRGLTDSCQESSVFKKMNFSSGKCT</sequence>
<dbReference type="EMBL" id="AF107763">
    <property type="protein sequence ID" value="AAD51133.1"/>
    <property type="molecule type" value="Genomic_DNA"/>
</dbReference>
<dbReference type="EMBL" id="AF107762">
    <property type="protein sequence ID" value="AAD51132.1"/>
    <property type="molecule type" value="mRNA"/>
</dbReference>
<dbReference type="EMBL" id="AAGK01000006">
    <property type="protein sequence ID" value="EAN30616.1"/>
    <property type="status" value="ALT_SEQ"/>
    <property type="molecule type" value="Genomic_DNA"/>
</dbReference>
<dbReference type="RefSeq" id="XP_762899.1">
    <property type="nucleotide sequence ID" value="XM_757806.1"/>
</dbReference>
<dbReference type="SMR" id="Q9TVU5"/>
<dbReference type="FunCoup" id="Q9TVU5">
    <property type="interactions" value="340"/>
</dbReference>
<dbReference type="STRING" id="5875.Q9TVU5"/>
<dbReference type="EnsemblProtists" id="EAN30616">
    <property type="protein sequence ID" value="EAN30616"/>
    <property type="gene ID" value="TP03_0775"/>
</dbReference>
<dbReference type="GeneID" id="3499708"/>
<dbReference type="KEGG" id="tpv:TP03_0775"/>
<dbReference type="VEuPathDB" id="PiroplasmaDB:TpMuguga_03g00775"/>
<dbReference type="eggNOG" id="KOG0084">
    <property type="taxonomic scope" value="Eukaryota"/>
</dbReference>
<dbReference type="InParanoid" id="Q9TVU5"/>
<dbReference type="Proteomes" id="UP000001949">
    <property type="component" value="Unassembled WGS sequence"/>
</dbReference>
<dbReference type="GO" id="GO:0005886">
    <property type="term" value="C:plasma membrane"/>
    <property type="evidence" value="ECO:0007669"/>
    <property type="project" value="UniProtKB-SubCell"/>
</dbReference>
<dbReference type="GO" id="GO:0005525">
    <property type="term" value="F:GTP binding"/>
    <property type="evidence" value="ECO:0007669"/>
    <property type="project" value="UniProtKB-KW"/>
</dbReference>
<dbReference type="GO" id="GO:0003924">
    <property type="term" value="F:GTPase activity"/>
    <property type="evidence" value="ECO:0007669"/>
    <property type="project" value="InterPro"/>
</dbReference>
<dbReference type="GO" id="GO:0015031">
    <property type="term" value="P:protein transport"/>
    <property type="evidence" value="ECO:0007669"/>
    <property type="project" value="UniProtKB-KW"/>
</dbReference>
<dbReference type="FunFam" id="3.40.50.300:FF:001018">
    <property type="entry name" value="Rab family GTPase"/>
    <property type="match status" value="1"/>
</dbReference>
<dbReference type="Gene3D" id="3.40.50.300">
    <property type="entry name" value="P-loop containing nucleotide triphosphate hydrolases"/>
    <property type="match status" value="1"/>
</dbReference>
<dbReference type="InterPro" id="IPR027417">
    <property type="entry name" value="P-loop_NTPase"/>
</dbReference>
<dbReference type="InterPro" id="IPR005225">
    <property type="entry name" value="Small_GTP-bd"/>
</dbReference>
<dbReference type="InterPro" id="IPR001806">
    <property type="entry name" value="Small_GTPase"/>
</dbReference>
<dbReference type="InterPro" id="IPR050305">
    <property type="entry name" value="Small_GTPase_Rab"/>
</dbReference>
<dbReference type="NCBIfam" id="TIGR00231">
    <property type="entry name" value="small_GTP"/>
    <property type="match status" value="1"/>
</dbReference>
<dbReference type="PANTHER" id="PTHR47980">
    <property type="entry name" value="LD44762P"/>
    <property type="match status" value="1"/>
</dbReference>
<dbReference type="Pfam" id="PF00071">
    <property type="entry name" value="Ras"/>
    <property type="match status" value="1"/>
</dbReference>
<dbReference type="PRINTS" id="PR00449">
    <property type="entry name" value="RASTRNSFRMNG"/>
</dbReference>
<dbReference type="SMART" id="SM00177">
    <property type="entry name" value="ARF"/>
    <property type="match status" value="1"/>
</dbReference>
<dbReference type="SMART" id="SM00175">
    <property type="entry name" value="RAB"/>
    <property type="match status" value="1"/>
</dbReference>
<dbReference type="SMART" id="SM00176">
    <property type="entry name" value="RAN"/>
    <property type="match status" value="1"/>
</dbReference>
<dbReference type="SMART" id="SM00173">
    <property type="entry name" value="RAS"/>
    <property type="match status" value="1"/>
</dbReference>
<dbReference type="SMART" id="SM00174">
    <property type="entry name" value="RHO"/>
    <property type="match status" value="1"/>
</dbReference>
<dbReference type="SUPFAM" id="SSF52540">
    <property type="entry name" value="P-loop containing nucleoside triphosphate hydrolases"/>
    <property type="match status" value="1"/>
</dbReference>
<dbReference type="PROSITE" id="PS51419">
    <property type="entry name" value="RAB"/>
    <property type="match status" value="1"/>
</dbReference>
<feature type="chain" id="PRO_0000233340" description="Ras-related protein Rab-1">
    <location>
        <begin position="1"/>
        <end position="220"/>
    </location>
</feature>
<feature type="short sequence motif" description="Effector region" evidence="1">
    <location>
        <begin position="36"/>
        <end position="44"/>
    </location>
</feature>
<feature type="binding site" evidence="1">
    <location>
        <begin position="14"/>
        <end position="21"/>
    </location>
    <ligand>
        <name>GTP</name>
        <dbReference type="ChEBI" id="CHEBI:37565"/>
    </ligand>
</feature>
<feature type="binding site" evidence="1">
    <location>
        <begin position="62"/>
        <end position="66"/>
    </location>
    <ligand>
        <name>GTP</name>
        <dbReference type="ChEBI" id="CHEBI:37565"/>
    </ligand>
</feature>
<feature type="binding site" evidence="1">
    <location>
        <begin position="121"/>
        <end position="124"/>
    </location>
    <ligand>
        <name>GTP</name>
        <dbReference type="ChEBI" id="CHEBI:37565"/>
    </ligand>
</feature>
<feature type="lipid moiety-binding region" description="S-geranylgeranyl cysteine" evidence="4">
    <location>
        <position position="219"/>
    </location>
</feature>
<keyword id="KW-1003">Cell membrane</keyword>
<keyword id="KW-0342">GTP-binding</keyword>
<keyword id="KW-0449">Lipoprotein</keyword>
<keyword id="KW-0472">Membrane</keyword>
<keyword id="KW-0547">Nucleotide-binding</keyword>
<keyword id="KW-0636">Prenylation</keyword>
<keyword id="KW-0653">Protein transport</keyword>
<keyword id="KW-1185">Reference proteome</keyword>
<keyword id="KW-0813">Transport</keyword>
<proteinExistence type="evidence at protein level"/>
<name>RAB1_THEPA</name>
<protein>
    <recommendedName>
        <fullName>Ras-related protein Rab-1</fullName>
    </recommendedName>
    <alternativeName>
        <fullName>Small GTP-binding protein rab1</fullName>
        <shortName>TpRab1</shortName>
    </alternativeName>
</protein>